<evidence type="ECO:0000255" key="1">
    <source>
        <dbReference type="HAMAP-Rule" id="MF_01903"/>
    </source>
</evidence>
<sequence>MSEKYIVTWDMLQIHARKLASRLMPSEQWKGIIAVSRGGLVPGALLARELGIRHVDTVCISSYDHDNQRELKVLKRAEGDGEGFIVIDDLVDTGGTAVAIREMYPKAHFVTIFAKPAGRPLVDDYVVDIPQNTWIEQPWDMGVVFVPPISGR</sequence>
<organism>
    <name type="scientific">Escherichia coli O127:H6 (strain E2348/69 / EPEC)</name>
    <dbReference type="NCBI Taxonomy" id="574521"/>
    <lineage>
        <taxon>Bacteria</taxon>
        <taxon>Pseudomonadati</taxon>
        <taxon>Pseudomonadota</taxon>
        <taxon>Gammaproteobacteria</taxon>
        <taxon>Enterobacterales</taxon>
        <taxon>Enterobacteriaceae</taxon>
        <taxon>Escherichia</taxon>
    </lineage>
</organism>
<reference key="1">
    <citation type="journal article" date="2009" name="J. Bacteriol.">
        <title>Complete genome sequence and comparative genome analysis of enteropathogenic Escherichia coli O127:H6 strain E2348/69.</title>
        <authorList>
            <person name="Iguchi A."/>
            <person name="Thomson N.R."/>
            <person name="Ogura Y."/>
            <person name="Saunders D."/>
            <person name="Ooka T."/>
            <person name="Henderson I.R."/>
            <person name="Harris D."/>
            <person name="Asadulghani M."/>
            <person name="Kurokawa K."/>
            <person name="Dean P."/>
            <person name="Kenny B."/>
            <person name="Quail M.A."/>
            <person name="Thurston S."/>
            <person name="Dougan G."/>
            <person name="Hayashi T."/>
            <person name="Parkhill J."/>
            <person name="Frankel G."/>
        </authorList>
    </citation>
    <scope>NUCLEOTIDE SEQUENCE [LARGE SCALE GENOMIC DNA]</scope>
    <source>
        <strain>E2348/69 / EPEC</strain>
    </source>
</reference>
<name>XGPT_ECO27</name>
<feature type="chain" id="PRO_1000188737" description="Xanthine-guanine phosphoribosyltransferase">
    <location>
        <begin position="1"/>
        <end position="152"/>
    </location>
</feature>
<feature type="binding site" evidence="1">
    <location>
        <begin position="37"/>
        <end position="38"/>
    </location>
    <ligand>
        <name>5-phospho-alpha-D-ribose 1-diphosphate</name>
        <dbReference type="ChEBI" id="CHEBI:58017"/>
    </ligand>
</feature>
<feature type="binding site" evidence="1">
    <location>
        <position position="69"/>
    </location>
    <ligand>
        <name>5-phospho-alpha-D-ribose 1-diphosphate</name>
        <dbReference type="ChEBI" id="CHEBI:58017"/>
    </ligand>
</feature>
<feature type="binding site" evidence="1">
    <location>
        <position position="69"/>
    </location>
    <ligand>
        <name>GMP</name>
        <dbReference type="ChEBI" id="CHEBI:58115"/>
    </ligand>
</feature>
<feature type="binding site" evidence="1">
    <location>
        <begin position="88"/>
        <end position="96"/>
    </location>
    <ligand>
        <name>5-phospho-alpha-D-ribose 1-diphosphate</name>
        <dbReference type="ChEBI" id="CHEBI:58017"/>
    </ligand>
</feature>
<feature type="binding site" evidence="1">
    <location>
        <position position="89"/>
    </location>
    <ligand>
        <name>Mg(2+)</name>
        <dbReference type="ChEBI" id="CHEBI:18420"/>
    </ligand>
</feature>
<feature type="binding site" evidence="1">
    <location>
        <begin position="92"/>
        <end position="96"/>
    </location>
    <ligand>
        <name>GMP</name>
        <dbReference type="ChEBI" id="CHEBI:58115"/>
    </ligand>
</feature>
<feature type="binding site" evidence="1">
    <location>
        <position position="92"/>
    </location>
    <ligand>
        <name>guanine</name>
        <dbReference type="ChEBI" id="CHEBI:16235"/>
    </ligand>
</feature>
<feature type="binding site" evidence="1">
    <location>
        <position position="92"/>
    </location>
    <ligand>
        <name>xanthine</name>
        <dbReference type="ChEBI" id="CHEBI:17712"/>
    </ligand>
</feature>
<feature type="binding site" evidence="1">
    <location>
        <begin position="134"/>
        <end position="135"/>
    </location>
    <ligand>
        <name>GMP</name>
        <dbReference type="ChEBI" id="CHEBI:58115"/>
    </ligand>
</feature>
<feature type="binding site" evidence="1">
    <location>
        <position position="135"/>
    </location>
    <ligand>
        <name>guanine</name>
        <dbReference type="ChEBI" id="CHEBI:16235"/>
    </ligand>
</feature>
<feature type="binding site" evidence="1">
    <location>
        <position position="135"/>
    </location>
    <ligand>
        <name>xanthine</name>
        <dbReference type="ChEBI" id="CHEBI:17712"/>
    </ligand>
</feature>
<keyword id="KW-0997">Cell inner membrane</keyword>
<keyword id="KW-1003">Cell membrane</keyword>
<keyword id="KW-0328">Glycosyltransferase</keyword>
<keyword id="KW-0460">Magnesium</keyword>
<keyword id="KW-0472">Membrane</keyword>
<keyword id="KW-0479">Metal-binding</keyword>
<keyword id="KW-0660">Purine salvage</keyword>
<keyword id="KW-1185">Reference proteome</keyword>
<keyword id="KW-0808">Transferase</keyword>
<comment type="function">
    <text evidence="1">Purine salvage pathway enzyme that catalyzes the transfer of the ribosyl-5-phosphate group from 5-phospho-alpha-D-ribose 1-diphosphate (PRPP) to the N9 position of the 6-oxopurines guanine and xanthine to form the corresponding ribonucleotides GMP (guanosine 5'-monophosphate) and XMP (xanthosine 5'-monophosphate), with the release of PPi. To a lesser extent, also acts on hypoxanthine.</text>
</comment>
<comment type="catalytic activity">
    <reaction evidence="1">
        <text>GMP + diphosphate = guanine + 5-phospho-alpha-D-ribose 1-diphosphate</text>
        <dbReference type="Rhea" id="RHEA:25424"/>
        <dbReference type="ChEBI" id="CHEBI:16235"/>
        <dbReference type="ChEBI" id="CHEBI:33019"/>
        <dbReference type="ChEBI" id="CHEBI:58017"/>
        <dbReference type="ChEBI" id="CHEBI:58115"/>
    </reaction>
    <physiologicalReaction direction="right-to-left" evidence="1">
        <dbReference type="Rhea" id="RHEA:25426"/>
    </physiologicalReaction>
</comment>
<comment type="catalytic activity">
    <reaction evidence="1">
        <text>XMP + diphosphate = xanthine + 5-phospho-alpha-D-ribose 1-diphosphate</text>
        <dbReference type="Rhea" id="RHEA:10800"/>
        <dbReference type="ChEBI" id="CHEBI:17712"/>
        <dbReference type="ChEBI" id="CHEBI:33019"/>
        <dbReference type="ChEBI" id="CHEBI:57464"/>
        <dbReference type="ChEBI" id="CHEBI:58017"/>
        <dbReference type="EC" id="2.4.2.22"/>
    </reaction>
    <physiologicalReaction direction="right-to-left" evidence="1">
        <dbReference type="Rhea" id="RHEA:10802"/>
    </physiologicalReaction>
</comment>
<comment type="catalytic activity">
    <reaction evidence="1">
        <text>IMP + diphosphate = hypoxanthine + 5-phospho-alpha-D-ribose 1-diphosphate</text>
        <dbReference type="Rhea" id="RHEA:17973"/>
        <dbReference type="ChEBI" id="CHEBI:17368"/>
        <dbReference type="ChEBI" id="CHEBI:33019"/>
        <dbReference type="ChEBI" id="CHEBI:58017"/>
        <dbReference type="ChEBI" id="CHEBI:58053"/>
    </reaction>
    <physiologicalReaction direction="right-to-left" evidence="1">
        <dbReference type="Rhea" id="RHEA:17975"/>
    </physiologicalReaction>
</comment>
<comment type="cofactor">
    <cofactor evidence="1">
        <name>Mg(2+)</name>
        <dbReference type="ChEBI" id="CHEBI:18420"/>
    </cofactor>
</comment>
<comment type="pathway">
    <text evidence="1">Purine metabolism; GMP biosynthesis via salvage pathway; GMP from guanine: step 1/1.</text>
</comment>
<comment type="pathway">
    <text evidence="1">Purine metabolism; XMP biosynthesis via salvage pathway; XMP from xanthine: step 1/1.</text>
</comment>
<comment type="subunit">
    <text evidence="1">Homotetramer.</text>
</comment>
<comment type="subcellular location">
    <subcellularLocation>
        <location evidence="1">Cell inner membrane</location>
        <topology evidence="1">Peripheral membrane protein</topology>
    </subcellularLocation>
</comment>
<comment type="similarity">
    <text evidence="1">Belongs to the purine/pyrimidine phosphoribosyltransferase family. XGPT subfamily.</text>
</comment>
<gene>
    <name evidence="1" type="primary">gpt</name>
    <name type="ordered locus">E2348C_0231</name>
</gene>
<accession>B7UJC6</accession>
<dbReference type="EC" id="2.4.2.-" evidence="1"/>
<dbReference type="EC" id="2.4.2.22" evidence="1"/>
<dbReference type="EMBL" id="FM180568">
    <property type="protein sequence ID" value="CAS07779.1"/>
    <property type="molecule type" value="Genomic_DNA"/>
</dbReference>
<dbReference type="RefSeq" id="WP_001291991.1">
    <property type="nucleotide sequence ID" value="NC_011601.1"/>
</dbReference>
<dbReference type="SMR" id="B7UJC6"/>
<dbReference type="GeneID" id="86945191"/>
<dbReference type="KEGG" id="ecg:E2348C_0231"/>
<dbReference type="HOGENOM" id="CLU_080904_3_0_6"/>
<dbReference type="UniPathway" id="UPA00602">
    <property type="reaction ID" value="UER00658"/>
</dbReference>
<dbReference type="UniPathway" id="UPA00909">
    <property type="reaction ID" value="UER00887"/>
</dbReference>
<dbReference type="Proteomes" id="UP000008205">
    <property type="component" value="Chromosome"/>
</dbReference>
<dbReference type="GO" id="GO:0005829">
    <property type="term" value="C:cytosol"/>
    <property type="evidence" value="ECO:0007669"/>
    <property type="project" value="TreeGrafter"/>
</dbReference>
<dbReference type="GO" id="GO:0005886">
    <property type="term" value="C:plasma membrane"/>
    <property type="evidence" value="ECO:0007669"/>
    <property type="project" value="UniProtKB-SubCell"/>
</dbReference>
<dbReference type="GO" id="GO:0052657">
    <property type="term" value="F:guanine phosphoribosyltransferase activity"/>
    <property type="evidence" value="ECO:0007669"/>
    <property type="project" value="RHEA"/>
</dbReference>
<dbReference type="GO" id="GO:0004422">
    <property type="term" value="F:hypoxanthine phosphoribosyltransferase activity"/>
    <property type="evidence" value="ECO:0007669"/>
    <property type="project" value="RHEA"/>
</dbReference>
<dbReference type="GO" id="GO:0000287">
    <property type="term" value="F:magnesium ion binding"/>
    <property type="evidence" value="ECO:0007669"/>
    <property type="project" value="UniProtKB-UniRule"/>
</dbReference>
<dbReference type="GO" id="GO:0000310">
    <property type="term" value="F:xanthine phosphoribosyltransferase activity"/>
    <property type="evidence" value="ECO:0007669"/>
    <property type="project" value="UniProtKB-UniRule"/>
</dbReference>
<dbReference type="GO" id="GO:0032263">
    <property type="term" value="P:GMP salvage"/>
    <property type="evidence" value="ECO:0007669"/>
    <property type="project" value="UniProtKB-UniRule"/>
</dbReference>
<dbReference type="GO" id="GO:0032264">
    <property type="term" value="P:IMP salvage"/>
    <property type="evidence" value="ECO:0007669"/>
    <property type="project" value="TreeGrafter"/>
</dbReference>
<dbReference type="GO" id="GO:0006166">
    <property type="term" value="P:purine ribonucleoside salvage"/>
    <property type="evidence" value="ECO:0007669"/>
    <property type="project" value="UniProtKB-KW"/>
</dbReference>
<dbReference type="GO" id="GO:0032265">
    <property type="term" value="P:XMP salvage"/>
    <property type="evidence" value="ECO:0007669"/>
    <property type="project" value="UniProtKB-UniRule"/>
</dbReference>
<dbReference type="CDD" id="cd06223">
    <property type="entry name" value="PRTases_typeI"/>
    <property type="match status" value="1"/>
</dbReference>
<dbReference type="FunFam" id="3.40.50.2020:FF:000009">
    <property type="entry name" value="Xanthine phosphoribosyltransferase"/>
    <property type="match status" value="1"/>
</dbReference>
<dbReference type="Gene3D" id="3.40.50.2020">
    <property type="match status" value="1"/>
</dbReference>
<dbReference type="HAMAP" id="MF_01903">
    <property type="entry name" value="XGPRT"/>
    <property type="match status" value="1"/>
</dbReference>
<dbReference type="InterPro" id="IPR000836">
    <property type="entry name" value="PRibTrfase_dom"/>
</dbReference>
<dbReference type="InterPro" id="IPR029057">
    <property type="entry name" value="PRTase-like"/>
</dbReference>
<dbReference type="InterPro" id="IPR023747">
    <property type="entry name" value="Xanthine_Guanine_PRibTrfase"/>
</dbReference>
<dbReference type="NCBIfam" id="NF006613">
    <property type="entry name" value="PRK09177.1"/>
    <property type="match status" value="1"/>
</dbReference>
<dbReference type="PANTHER" id="PTHR39563">
    <property type="entry name" value="XANTHINE PHOSPHORIBOSYLTRANSFERASE"/>
    <property type="match status" value="1"/>
</dbReference>
<dbReference type="PANTHER" id="PTHR39563:SF1">
    <property type="entry name" value="XANTHINE-GUANINE PHOSPHORIBOSYLTRANSFERASE"/>
    <property type="match status" value="1"/>
</dbReference>
<dbReference type="Pfam" id="PF00156">
    <property type="entry name" value="Pribosyltran"/>
    <property type="match status" value="1"/>
</dbReference>
<dbReference type="SUPFAM" id="SSF53271">
    <property type="entry name" value="PRTase-like"/>
    <property type="match status" value="1"/>
</dbReference>
<dbReference type="PROSITE" id="PS00103">
    <property type="entry name" value="PUR_PYR_PR_TRANSFER"/>
    <property type="match status" value="1"/>
</dbReference>
<protein>
    <recommendedName>
        <fullName evidence="1">Xanthine-guanine phosphoribosyltransferase</fullName>
        <shortName evidence="1">XGPRT</shortName>
        <ecNumber evidence="1">2.4.2.-</ecNumber>
        <ecNumber evidence="1">2.4.2.22</ecNumber>
    </recommendedName>
    <alternativeName>
        <fullName evidence="1">Xanthine phosphoribosyltransferase</fullName>
    </alternativeName>
</protein>
<proteinExistence type="inferred from homology"/>